<dbReference type="InParanoid" id="P84553"/>
<dbReference type="Proteomes" id="UP000000539">
    <property type="component" value="Unassembled WGS sequence"/>
</dbReference>
<dbReference type="GO" id="GO:0005694">
    <property type="term" value="C:chromosome"/>
    <property type="evidence" value="ECO:0007669"/>
    <property type="project" value="UniProtKB-SubCell"/>
</dbReference>
<dbReference type="GO" id="GO:0005634">
    <property type="term" value="C:nucleus"/>
    <property type="evidence" value="ECO:0007669"/>
    <property type="project" value="UniProtKB-SubCell"/>
</dbReference>
<dbReference type="GO" id="GO:0003677">
    <property type="term" value="F:DNA binding"/>
    <property type="evidence" value="ECO:0007669"/>
    <property type="project" value="UniProtKB-KW"/>
</dbReference>
<proteinExistence type="evidence at protein level"/>
<feature type="chain" id="PRO_0000225614" description="Histone H1.A2">
    <location>
        <begin position="1" status="less than"/>
        <end position="11" status="greater than"/>
    </location>
</feature>
<feature type="sequence variant" description="In H1.A1." evidence="2">
    <original>K</original>
    <variation>E</variation>
    <location>
        <position position="8"/>
    </location>
</feature>
<feature type="non-terminal residue" evidence="3">
    <location>
        <position position="1"/>
    </location>
</feature>
<feature type="non-terminal residue" evidence="3">
    <location>
        <position position="11"/>
    </location>
</feature>
<reference key="1">
    <citation type="journal article" date="2006" name="FEBS J.">
        <title>Sequence variants of chicken linker histone H1.a.</title>
        <authorList>
            <person name="Gornicka-Michalska E."/>
            <person name="Palyga J."/>
            <person name="Kowalski A."/>
            <person name="Cywa-Benko K."/>
        </authorList>
    </citation>
    <scope>PROTEIN SEQUENCE</scope>
    <scope>VARIANT H1.A1 GLU-8</scope>
    <source>
        <strain>Rhode Island red</strain>
        <tissue>Erythrocyte</tissue>
    </source>
</reference>
<evidence type="ECO:0000255" key="1"/>
<evidence type="ECO:0000269" key="2">
    <source>
    </source>
</evidence>
<evidence type="ECO:0000303" key="3">
    <source>
    </source>
</evidence>
<evidence type="ECO:0000305" key="4"/>
<organism>
    <name type="scientific">Gallus gallus</name>
    <name type="common">Chicken</name>
    <dbReference type="NCBI Taxonomy" id="9031"/>
    <lineage>
        <taxon>Eukaryota</taxon>
        <taxon>Metazoa</taxon>
        <taxon>Chordata</taxon>
        <taxon>Craniata</taxon>
        <taxon>Vertebrata</taxon>
        <taxon>Euteleostomi</taxon>
        <taxon>Archelosauria</taxon>
        <taxon>Archosauria</taxon>
        <taxon>Dinosauria</taxon>
        <taxon>Saurischia</taxon>
        <taxon>Theropoda</taxon>
        <taxon>Coelurosauria</taxon>
        <taxon>Aves</taxon>
        <taxon>Neognathae</taxon>
        <taxon>Galloanserae</taxon>
        <taxon>Galliformes</taxon>
        <taxon>Phasianidae</taxon>
        <taxon>Phasianinae</taxon>
        <taxon>Gallus</taxon>
    </lineage>
</organism>
<keyword id="KW-0158">Chromosome</keyword>
<keyword id="KW-0903">Direct protein sequencing</keyword>
<keyword id="KW-0238">DNA-binding</keyword>
<keyword id="KW-0539">Nucleus</keyword>
<keyword id="KW-1185">Reference proteome</keyword>
<name>H1A2_CHICK</name>
<comment type="function">
    <text>Histones H1 are necessary for the condensation of nucleosome chains into higher-order structures.</text>
</comment>
<comment type="subcellular location">
    <subcellularLocation>
        <location evidence="4">Nucleus</location>
    </subcellularLocation>
    <subcellularLocation>
        <location>Chromosome</location>
    </subcellularLocation>
</comment>
<comment type="similarity">
    <text evidence="1">Belongs to the histone H1/H5 family.</text>
</comment>
<accession>P84553</accession>
<protein>
    <recommendedName>
        <fullName>Histone H1.A2</fullName>
    </recommendedName>
</protein>
<sequence length="11" mass="1270">RLSKKPGKVKE</sequence>